<dbReference type="EMBL" id="AL009126">
    <property type="protein sequence ID" value="CAE01456.1"/>
    <property type="molecule type" value="Genomic_DNA"/>
</dbReference>
<dbReference type="RefSeq" id="WP_003231427.1">
    <property type="nucleotide sequence ID" value="NZ_OZ025638.1"/>
</dbReference>
<dbReference type="RefSeq" id="YP_054581.1">
    <property type="nucleotide sequence ID" value="NC_000964.3"/>
</dbReference>
<dbReference type="FunCoup" id="Q7WY68">
    <property type="interactions" value="45"/>
</dbReference>
<dbReference type="STRING" id="224308.BSU18600"/>
<dbReference type="PaxDb" id="224308-BSU18600"/>
<dbReference type="EnsemblBacteria" id="CAE01456">
    <property type="protein sequence ID" value="CAE01456"/>
    <property type="gene ID" value="BSU_18600"/>
</dbReference>
<dbReference type="GeneID" id="2914173"/>
<dbReference type="KEGG" id="bsu:BSU18600"/>
<dbReference type="PATRIC" id="fig|224308.179.peg.2028"/>
<dbReference type="eggNOG" id="ENOG502ZSX9">
    <property type="taxonomic scope" value="Bacteria"/>
</dbReference>
<dbReference type="InParanoid" id="Q7WY68"/>
<dbReference type="OrthoDB" id="2476089at2"/>
<dbReference type="BioCyc" id="BSUB:BSU18600-MONOMER"/>
<dbReference type="Proteomes" id="UP000001570">
    <property type="component" value="Chromosome"/>
</dbReference>
<dbReference type="InterPro" id="IPR025100">
    <property type="entry name" value="DUF4025"/>
</dbReference>
<dbReference type="Pfam" id="PF13217">
    <property type="entry name" value="DUF4025"/>
    <property type="match status" value="1"/>
</dbReference>
<sequence>MTQKNGADRPDDYKRFSSLDKEYDFQQSIRSNTETESVNTETQTHNKENKNDTTDVAGKYFEPSDYKGSTQLEKGLAETHEQVSDDYFEGTIDQNLD</sequence>
<protein>
    <recommendedName>
        <fullName>Uncharacterized protein YozQ</fullName>
    </recommendedName>
</protein>
<name>YOZQ_BACSU</name>
<accession>Q7WY68</accession>
<proteinExistence type="predicted"/>
<evidence type="ECO:0000256" key="1">
    <source>
        <dbReference type="SAM" id="MobiDB-lite"/>
    </source>
</evidence>
<feature type="chain" id="PRO_0000049674" description="Uncharacterized protein YozQ">
    <location>
        <begin position="1"/>
        <end position="97"/>
    </location>
</feature>
<feature type="region of interest" description="Disordered" evidence="1">
    <location>
        <begin position="1"/>
        <end position="97"/>
    </location>
</feature>
<feature type="compositionally biased region" description="Basic and acidic residues" evidence="1">
    <location>
        <begin position="1"/>
        <end position="24"/>
    </location>
</feature>
<feature type="compositionally biased region" description="Low complexity" evidence="1">
    <location>
        <begin position="31"/>
        <end position="43"/>
    </location>
</feature>
<feature type="compositionally biased region" description="Basic and acidic residues" evidence="1">
    <location>
        <begin position="44"/>
        <end position="53"/>
    </location>
</feature>
<reference key="1">
    <citation type="journal article" date="1997" name="Nature">
        <title>The complete genome sequence of the Gram-positive bacterium Bacillus subtilis.</title>
        <authorList>
            <person name="Kunst F."/>
            <person name="Ogasawara N."/>
            <person name="Moszer I."/>
            <person name="Albertini A.M."/>
            <person name="Alloni G."/>
            <person name="Azevedo V."/>
            <person name="Bertero M.G."/>
            <person name="Bessieres P."/>
            <person name="Bolotin A."/>
            <person name="Borchert S."/>
            <person name="Borriss R."/>
            <person name="Boursier L."/>
            <person name="Brans A."/>
            <person name="Braun M."/>
            <person name="Brignell S.C."/>
            <person name="Bron S."/>
            <person name="Brouillet S."/>
            <person name="Bruschi C.V."/>
            <person name="Caldwell B."/>
            <person name="Capuano V."/>
            <person name="Carter N.M."/>
            <person name="Choi S.-K."/>
            <person name="Codani J.-J."/>
            <person name="Connerton I.F."/>
            <person name="Cummings N.J."/>
            <person name="Daniel R.A."/>
            <person name="Denizot F."/>
            <person name="Devine K.M."/>
            <person name="Duesterhoeft A."/>
            <person name="Ehrlich S.D."/>
            <person name="Emmerson P.T."/>
            <person name="Entian K.-D."/>
            <person name="Errington J."/>
            <person name="Fabret C."/>
            <person name="Ferrari E."/>
            <person name="Foulger D."/>
            <person name="Fritz C."/>
            <person name="Fujita M."/>
            <person name="Fujita Y."/>
            <person name="Fuma S."/>
            <person name="Galizzi A."/>
            <person name="Galleron N."/>
            <person name="Ghim S.-Y."/>
            <person name="Glaser P."/>
            <person name="Goffeau A."/>
            <person name="Golightly E.J."/>
            <person name="Grandi G."/>
            <person name="Guiseppi G."/>
            <person name="Guy B.J."/>
            <person name="Haga K."/>
            <person name="Haiech J."/>
            <person name="Harwood C.R."/>
            <person name="Henaut A."/>
            <person name="Hilbert H."/>
            <person name="Holsappel S."/>
            <person name="Hosono S."/>
            <person name="Hullo M.-F."/>
            <person name="Itaya M."/>
            <person name="Jones L.-M."/>
            <person name="Joris B."/>
            <person name="Karamata D."/>
            <person name="Kasahara Y."/>
            <person name="Klaerr-Blanchard M."/>
            <person name="Klein C."/>
            <person name="Kobayashi Y."/>
            <person name="Koetter P."/>
            <person name="Koningstein G."/>
            <person name="Krogh S."/>
            <person name="Kumano M."/>
            <person name="Kurita K."/>
            <person name="Lapidus A."/>
            <person name="Lardinois S."/>
            <person name="Lauber J."/>
            <person name="Lazarevic V."/>
            <person name="Lee S.-M."/>
            <person name="Levine A."/>
            <person name="Liu H."/>
            <person name="Masuda S."/>
            <person name="Mauel C."/>
            <person name="Medigue C."/>
            <person name="Medina N."/>
            <person name="Mellado R.P."/>
            <person name="Mizuno M."/>
            <person name="Moestl D."/>
            <person name="Nakai S."/>
            <person name="Noback M."/>
            <person name="Noone D."/>
            <person name="O'Reilly M."/>
            <person name="Ogawa K."/>
            <person name="Ogiwara A."/>
            <person name="Oudega B."/>
            <person name="Park S.-H."/>
            <person name="Parro V."/>
            <person name="Pohl T.M."/>
            <person name="Portetelle D."/>
            <person name="Porwollik S."/>
            <person name="Prescott A.M."/>
            <person name="Presecan E."/>
            <person name="Pujic P."/>
            <person name="Purnelle B."/>
            <person name="Rapoport G."/>
            <person name="Rey M."/>
            <person name="Reynolds S."/>
            <person name="Rieger M."/>
            <person name="Rivolta C."/>
            <person name="Rocha E."/>
            <person name="Roche B."/>
            <person name="Rose M."/>
            <person name="Sadaie Y."/>
            <person name="Sato T."/>
            <person name="Scanlan E."/>
            <person name="Schleich S."/>
            <person name="Schroeter R."/>
            <person name="Scoffone F."/>
            <person name="Sekiguchi J."/>
            <person name="Sekowska A."/>
            <person name="Seror S.J."/>
            <person name="Serror P."/>
            <person name="Shin B.-S."/>
            <person name="Soldo B."/>
            <person name="Sorokin A."/>
            <person name="Tacconi E."/>
            <person name="Takagi T."/>
            <person name="Takahashi H."/>
            <person name="Takemaru K."/>
            <person name="Takeuchi M."/>
            <person name="Tamakoshi A."/>
            <person name="Tanaka T."/>
            <person name="Terpstra P."/>
            <person name="Tognoni A."/>
            <person name="Tosato V."/>
            <person name="Uchiyama S."/>
            <person name="Vandenbol M."/>
            <person name="Vannier F."/>
            <person name="Vassarotti A."/>
            <person name="Viari A."/>
            <person name="Wambutt R."/>
            <person name="Wedler E."/>
            <person name="Wedler H."/>
            <person name="Weitzenegger T."/>
            <person name="Winters P."/>
            <person name="Wipat A."/>
            <person name="Yamamoto H."/>
            <person name="Yamane K."/>
            <person name="Yasumoto K."/>
            <person name="Yata K."/>
            <person name="Yoshida K."/>
            <person name="Yoshikawa H.-F."/>
            <person name="Zumstein E."/>
            <person name="Yoshikawa H."/>
            <person name="Danchin A."/>
        </authorList>
    </citation>
    <scope>NUCLEOTIDE SEQUENCE [LARGE SCALE GENOMIC DNA]</scope>
    <source>
        <strain>168</strain>
    </source>
</reference>
<gene>
    <name type="primary">yozQ</name>
    <name type="ordered locus">BSU18600</name>
</gene>
<keyword id="KW-1185">Reference proteome</keyword>
<organism>
    <name type="scientific">Bacillus subtilis (strain 168)</name>
    <dbReference type="NCBI Taxonomy" id="224308"/>
    <lineage>
        <taxon>Bacteria</taxon>
        <taxon>Bacillati</taxon>
        <taxon>Bacillota</taxon>
        <taxon>Bacilli</taxon>
        <taxon>Bacillales</taxon>
        <taxon>Bacillaceae</taxon>
        <taxon>Bacillus</taxon>
    </lineage>
</organism>